<organism>
    <name type="scientific">Rattus norvegicus</name>
    <name type="common">Rat</name>
    <dbReference type="NCBI Taxonomy" id="10116"/>
    <lineage>
        <taxon>Eukaryota</taxon>
        <taxon>Metazoa</taxon>
        <taxon>Chordata</taxon>
        <taxon>Craniata</taxon>
        <taxon>Vertebrata</taxon>
        <taxon>Euteleostomi</taxon>
        <taxon>Mammalia</taxon>
        <taxon>Eutheria</taxon>
        <taxon>Euarchontoglires</taxon>
        <taxon>Glires</taxon>
        <taxon>Rodentia</taxon>
        <taxon>Myomorpha</taxon>
        <taxon>Muroidea</taxon>
        <taxon>Muridae</taxon>
        <taxon>Murinae</taxon>
        <taxon>Rattus</taxon>
    </lineage>
</organism>
<comment type="function">
    <text evidence="1 3">Promotes matrix assembly (By similarity). Involved in the organization of skeletal muscles and in the formation of neuromuscular junctions (By similarity).</text>
</comment>
<comment type="subunit">
    <text evidence="3">Homodimer or homomultimer; disulfide-linked. Interacts with HSPG2.</text>
</comment>
<comment type="subcellular location">
    <subcellularLocation>
        <location evidence="3">Secreted</location>
        <location evidence="3">Extracellular space</location>
        <location evidence="3">Extracellular matrix</location>
        <location evidence="3">Basement membrane</location>
    </subcellularLocation>
</comment>
<comment type="PTM">
    <text evidence="3">N-glycosylated.</text>
</comment>
<name>VWA1_RAT</name>
<evidence type="ECO:0000250" key="1">
    <source>
        <dbReference type="UniProtKB" id="E7FF10"/>
    </source>
</evidence>
<evidence type="ECO:0000250" key="2">
    <source>
        <dbReference type="UniProtKB" id="Q6PCB0"/>
    </source>
</evidence>
<evidence type="ECO:0000250" key="3">
    <source>
        <dbReference type="UniProtKB" id="Q8R2Z5"/>
    </source>
</evidence>
<evidence type="ECO:0000255" key="4"/>
<evidence type="ECO:0000255" key="5">
    <source>
        <dbReference type="PROSITE-ProRule" id="PRU00219"/>
    </source>
</evidence>
<evidence type="ECO:0000255" key="6">
    <source>
        <dbReference type="PROSITE-ProRule" id="PRU00316"/>
    </source>
</evidence>
<feature type="signal peptide" evidence="4">
    <location>
        <begin position="1"/>
        <end position="18"/>
    </location>
</feature>
<feature type="chain" id="PRO_0000307158" description="von Willebrand factor A domain-containing protein 1">
    <location>
        <begin position="19"/>
        <end position="415"/>
    </location>
</feature>
<feature type="domain" description="VWFA" evidence="5">
    <location>
        <begin position="34"/>
        <end position="213"/>
    </location>
</feature>
<feature type="domain" description="Fibronectin type-III 1" evidence="6">
    <location>
        <begin position="214"/>
        <end position="305"/>
    </location>
</feature>
<feature type="domain" description="Fibronectin type-III 2" evidence="6">
    <location>
        <begin position="307"/>
        <end position="405"/>
    </location>
</feature>
<feature type="modified residue" description="Phosphoserine" evidence="2">
    <location>
        <position position="74"/>
    </location>
</feature>
<feature type="modified residue" description="Phosphoserine" evidence="2">
    <location>
        <position position="80"/>
    </location>
</feature>
<feature type="modified residue" description="Phosphoserine" evidence="2">
    <location>
        <position position="93"/>
    </location>
</feature>
<feature type="glycosylation site" description="N-linked (GlcNAc...) asparagine" evidence="4">
    <location>
        <position position="264"/>
    </location>
</feature>
<feature type="disulfide bond" evidence="3">
    <location>
        <begin position="369"/>
        <end position="393"/>
    </location>
</feature>
<reference key="1">
    <citation type="journal article" date="2004" name="Genome Res.">
        <title>The status, quality, and expansion of the NIH full-length cDNA project: the Mammalian Gene Collection (MGC).</title>
        <authorList>
            <consortium name="The MGC Project Team"/>
        </authorList>
    </citation>
    <scope>NUCLEOTIDE SEQUENCE [LARGE SCALE MRNA]</scope>
    <source>
        <tissue>Kidney</tissue>
    </source>
</reference>
<accession>Q642A6</accession>
<protein>
    <recommendedName>
        <fullName>von Willebrand factor A domain-containing protein 1</fullName>
    </recommendedName>
</protein>
<keyword id="KW-0084">Basement membrane</keyword>
<keyword id="KW-1015">Disulfide bond</keyword>
<keyword id="KW-0272">Extracellular matrix</keyword>
<keyword id="KW-0325">Glycoprotein</keyword>
<keyword id="KW-0597">Phosphoprotein</keyword>
<keyword id="KW-1185">Reference proteome</keyword>
<keyword id="KW-0677">Repeat</keyword>
<keyword id="KW-0964">Secreted</keyword>
<keyword id="KW-0732">Signal</keyword>
<gene>
    <name type="primary">Vwa1</name>
</gene>
<sequence>MLFWTVLSMALSLRLALAQSGIERGPTASAPQGDLLFLLDSSASVSHYEFSRVREFVGQLVATMPFGPGALRASLVHVGSRPHTEFTFDQYSSGQAIQDAVRVAPQRMGDTNTGLALAYAKEQLFAEEAGARLGVPKVLVWVTDGASSDSVGPPMQELKDLGVTIFIVSTGRGNLLELLAAASAPAEKHLHFVDVDDLPIIARELRGAIIDAMQPHQLHASEILSNGFRLSWPPLLTADSGYYVLELVPSGKLAATRRQQLPGNATSWTWTDLNPDTDYEVSLLPESNVRLLRPQHLRVRTLQEEAGPERIVISHTRPRSLRVSWAPALGPDSTLGYLVQLGPLQGGSLEHVEVPAGQNSTTIQGLTPCTTYLVTVTAAFRSGRQRALSAKACTASGERIRVPQAMRPEAGLREP</sequence>
<dbReference type="EMBL" id="BC081983">
    <property type="protein sequence ID" value="AAH81983.1"/>
    <property type="molecule type" value="mRNA"/>
</dbReference>
<dbReference type="RefSeq" id="NP_001013960.1">
    <property type="nucleotide sequence ID" value="NM_001013938.1"/>
</dbReference>
<dbReference type="SMR" id="Q642A6"/>
<dbReference type="FunCoup" id="Q642A6">
    <property type="interactions" value="103"/>
</dbReference>
<dbReference type="STRING" id="10116.ENSRNOP00000024897"/>
<dbReference type="GlyCosmos" id="Q642A6">
    <property type="glycosylation" value="1 site, No reported glycans"/>
</dbReference>
<dbReference type="GlyGen" id="Q642A6">
    <property type="glycosylation" value="2 sites"/>
</dbReference>
<dbReference type="PhosphoSitePlus" id="Q642A6"/>
<dbReference type="PaxDb" id="10116-ENSRNOP00000024897"/>
<dbReference type="Ensembl" id="ENSRNOT00000024897.8">
    <property type="protein sequence ID" value="ENSRNOP00000024897.6"/>
    <property type="gene ID" value="ENSRNOG00000018338.8"/>
</dbReference>
<dbReference type="GeneID" id="298683"/>
<dbReference type="KEGG" id="rno:298683"/>
<dbReference type="AGR" id="RGD:1311476"/>
<dbReference type="CTD" id="64856"/>
<dbReference type="RGD" id="1311476">
    <property type="gene designation" value="Vwa1"/>
</dbReference>
<dbReference type="eggNOG" id="KOG1217">
    <property type="taxonomic scope" value="Eukaryota"/>
</dbReference>
<dbReference type="eggNOG" id="KOG3544">
    <property type="taxonomic scope" value="Eukaryota"/>
</dbReference>
<dbReference type="GeneTree" id="ENSGT00940000160734"/>
<dbReference type="HOGENOM" id="CLU_042926_0_0_1"/>
<dbReference type="InParanoid" id="Q642A6"/>
<dbReference type="OMA" id="WMLMCLL"/>
<dbReference type="OrthoDB" id="9949424at2759"/>
<dbReference type="PhylomeDB" id="Q642A6"/>
<dbReference type="Reactome" id="R-RNO-381426">
    <property type="pathway name" value="Regulation of Insulin-like Growth Factor (IGF) transport and uptake by Insulin-like Growth Factor Binding Proteins (IGFBPs)"/>
</dbReference>
<dbReference type="Reactome" id="R-RNO-8957275">
    <property type="pathway name" value="Post-translational protein phosphorylation"/>
</dbReference>
<dbReference type="PRO" id="PR:Q642A6"/>
<dbReference type="Proteomes" id="UP000002494">
    <property type="component" value="Chromosome 5"/>
</dbReference>
<dbReference type="Bgee" id="ENSRNOG00000018338">
    <property type="expression patterns" value="Expressed in jejunum and 19 other cell types or tissues"/>
</dbReference>
<dbReference type="GO" id="GO:0005604">
    <property type="term" value="C:basement membrane"/>
    <property type="evidence" value="ECO:0000266"/>
    <property type="project" value="RGD"/>
</dbReference>
<dbReference type="GO" id="GO:0062023">
    <property type="term" value="C:collagen-containing extracellular matrix"/>
    <property type="evidence" value="ECO:0000318"/>
    <property type="project" value="GO_Central"/>
</dbReference>
<dbReference type="GO" id="GO:0031012">
    <property type="term" value="C:extracellular matrix"/>
    <property type="evidence" value="ECO:0000266"/>
    <property type="project" value="RGD"/>
</dbReference>
<dbReference type="GO" id="GO:0005576">
    <property type="term" value="C:extracellular region"/>
    <property type="evidence" value="ECO:0000266"/>
    <property type="project" value="RGD"/>
</dbReference>
<dbReference type="GO" id="GO:0005614">
    <property type="term" value="C:interstitial matrix"/>
    <property type="evidence" value="ECO:0000266"/>
    <property type="project" value="RGD"/>
</dbReference>
<dbReference type="GO" id="GO:0042802">
    <property type="term" value="F:identical protein binding"/>
    <property type="evidence" value="ECO:0000266"/>
    <property type="project" value="RGD"/>
</dbReference>
<dbReference type="GO" id="GO:0050436">
    <property type="term" value="F:microfibril binding"/>
    <property type="evidence" value="ECO:0000266"/>
    <property type="project" value="RGD"/>
</dbReference>
<dbReference type="GO" id="GO:0042803">
    <property type="term" value="F:protein homodimerization activity"/>
    <property type="evidence" value="ECO:0000266"/>
    <property type="project" value="RGD"/>
</dbReference>
<dbReference type="GO" id="GO:0048266">
    <property type="term" value="P:behavioral response to pain"/>
    <property type="evidence" value="ECO:0000266"/>
    <property type="project" value="RGD"/>
</dbReference>
<dbReference type="GO" id="GO:0030198">
    <property type="term" value="P:extracellular matrix organization"/>
    <property type="evidence" value="ECO:0000266"/>
    <property type="project" value="RGD"/>
</dbReference>
<dbReference type="GO" id="GO:0051260">
    <property type="term" value="P:protein homooligomerization"/>
    <property type="evidence" value="ECO:0000266"/>
    <property type="project" value="RGD"/>
</dbReference>
<dbReference type="CDD" id="cd00063">
    <property type="entry name" value="FN3"/>
    <property type="match status" value="2"/>
</dbReference>
<dbReference type="FunFam" id="2.60.40.10:FF:001442">
    <property type="entry name" value="von Willebrand factor A domain containing 1"/>
    <property type="match status" value="1"/>
</dbReference>
<dbReference type="FunFam" id="2.60.40.10:FF:000638">
    <property type="entry name" value="von Willebrand factor A domain-containing 1"/>
    <property type="match status" value="1"/>
</dbReference>
<dbReference type="FunFam" id="3.40.50.410:FF:000046">
    <property type="entry name" value="von Willebrand factor A domain-containing protein 1"/>
    <property type="match status" value="1"/>
</dbReference>
<dbReference type="Gene3D" id="2.60.40.10">
    <property type="entry name" value="Immunoglobulins"/>
    <property type="match status" value="2"/>
</dbReference>
<dbReference type="Gene3D" id="3.40.50.410">
    <property type="entry name" value="von Willebrand factor, type A domain"/>
    <property type="match status" value="1"/>
</dbReference>
<dbReference type="InterPro" id="IPR050525">
    <property type="entry name" value="ECM_Assembly_Org"/>
</dbReference>
<dbReference type="InterPro" id="IPR003961">
    <property type="entry name" value="FN3_dom"/>
</dbReference>
<dbReference type="InterPro" id="IPR036116">
    <property type="entry name" value="FN3_sf"/>
</dbReference>
<dbReference type="InterPro" id="IPR013783">
    <property type="entry name" value="Ig-like_fold"/>
</dbReference>
<dbReference type="InterPro" id="IPR002035">
    <property type="entry name" value="VWF_A"/>
</dbReference>
<dbReference type="InterPro" id="IPR036465">
    <property type="entry name" value="vWFA_dom_sf"/>
</dbReference>
<dbReference type="PANTHER" id="PTHR24020">
    <property type="entry name" value="COLLAGEN ALPHA"/>
    <property type="match status" value="1"/>
</dbReference>
<dbReference type="PANTHER" id="PTHR24020:SF77">
    <property type="entry name" value="VON WILLEBRAND FACTOR A DOMAIN-CONTAINING PROTEIN 1"/>
    <property type="match status" value="1"/>
</dbReference>
<dbReference type="Pfam" id="PF00041">
    <property type="entry name" value="fn3"/>
    <property type="match status" value="2"/>
</dbReference>
<dbReference type="Pfam" id="PF00092">
    <property type="entry name" value="VWA"/>
    <property type="match status" value="1"/>
</dbReference>
<dbReference type="PRINTS" id="PR00453">
    <property type="entry name" value="VWFADOMAIN"/>
</dbReference>
<dbReference type="SMART" id="SM00060">
    <property type="entry name" value="FN3"/>
    <property type="match status" value="2"/>
</dbReference>
<dbReference type="SMART" id="SM00327">
    <property type="entry name" value="VWA"/>
    <property type="match status" value="1"/>
</dbReference>
<dbReference type="SUPFAM" id="SSF49265">
    <property type="entry name" value="Fibronectin type III"/>
    <property type="match status" value="1"/>
</dbReference>
<dbReference type="SUPFAM" id="SSF53300">
    <property type="entry name" value="vWA-like"/>
    <property type="match status" value="1"/>
</dbReference>
<dbReference type="PROSITE" id="PS50853">
    <property type="entry name" value="FN3"/>
    <property type="match status" value="2"/>
</dbReference>
<dbReference type="PROSITE" id="PS50234">
    <property type="entry name" value="VWFA"/>
    <property type="match status" value="1"/>
</dbReference>
<proteinExistence type="evidence at transcript level"/>